<accession>B7MQ74</accession>
<protein>
    <recommendedName>
        <fullName evidence="1">Xanthine-guanine phosphoribosyltransferase</fullName>
        <shortName evidence="1">XGPRT</shortName>
        <ecNumber evidence="1">2.4.2.-</ecNumber>
        <ecNumber evidence="1">2.4.2.22</ecNumber>
    </recommendedName>
    <alternativeName>
        <fullName evidence="1">Xanthine phosphoribosyltransferase</fullName>
    </alternativeName>
</protein>
<keyword id="KW-0997">Cell inner membrane</keyword>
<keyword id="KW-1003">Cell membrane</keyword>
<keyword id="KW-0328">Glycosyltransferase</keyword>
<keyword id="KW-0460">Magnesium</keyword>
<keyword id="KW-0472">Membrane</keyword>
<keyword id="KW-0479">Metal-binding</keyword>
<keyword id="KW-0660">Purine salvage</keyword>
<keyword id="KW-0808">Transferase</keyword>
<feature type="chain" id="PRO_1000188742" description="Xanthine-guanine phosphoribosyltransferase">
    <location>
        <begin position="1"/>
        <end position="152"/>
    </location>
</feature>
<feature type="binding site" evidence="1">
    <location>
        <begin position="37"/>
        <end position="38"/>
    </location>
    <ligand>
        <name>5-phospho-alpha-D-ribose 1-diphosphate</name>
        <dbReference type="ChEBI" id="CHEBI:58017"/>
    </ligand>
</feature>
<feature type="binding site" evidence="1">
    <location>
        <position position="69"/>
    </location>
    <ligand>
        <name>5-phospho-alpha-D-ribose 1-diphosphate</name>
        <dbReference type="ChEBI" id="CHEBI:58017"/>
    </ligand>
</feature>
<feature type="binding site" evidence="1">
    <location>
        <position position="69"/>
    </location>
    <ligand>
        <name>GMP</name>
        <dbReference type="ChEBI" id="CHEBI:58115"/>
    </ligand>
</feature>
<feature type="binding site" evidence="1">
    <location>
        <begin position="88"/>
        <end position="96"/>
    </location>
    <ligand>
        <name>5-phospho-alpha-D-ribose 1-diphosphate</name>
        <dbReference type="ChEBI" id="CHEBI:58017"/>
    </ligand>
</feature>
<feature type="binding site" evidence="1">
    <location>
        <position position="89"/>
    </location>
    <ligand>
        <name>Mg(2+)</name>
        <dbReference type="ChEBI" id="CHEBI:18420"/>
    </ligand>
</feature>
<feature type="binding site" evidence="1">
    <location>
        <begin position="92"/>
        <end position="96"/>
    </location>
    <ligand>
        <name>GMP</name>
        <dbReference type="ChEBI" id="CHEBI:58115"/>
    </ligand>
</feature>
<feature type="binding site" evidence="1">
    <location>
        <position position="92"/>
    </location>
    <ligand>
        <name>guanine</name>
        <dbReference type="ChEBI" id="CHEBI:16235"/>
    </ligand>
</feature>
<feature type="binding site" evidence="1">
    <location>
        <position position="92"/>
    </location>
    <ligand>
        <name>xanthine</name>
        <dbReference type="ChEBI" id="CHEBI:17712"/>
    </ligand>
</feature>
<feature type="binding site" evidence="1">
    <location>
        <begin position="134"/>
        <end position="135"/>
    </location>
    <ligand>
        <name>GMP</name>
        <dbReference type="ChEBI" id="CHEBI:58115"/>
    </ligand>
</feature>
<feature type="binding site" evidence="1">
    <location>
        <position position="135"/>
    </location>
    <ligand>
        <name>guanine</name>
        <dbReference type="ChEBI" id="CHEBI:16235"/>
    </ligand>
</feature>
<feature type="binding site" evidence="1">
    <location>
        <position position="135"/>
    </location>
    <ligand>
        <name>xanthine</name>
        <dbReference type="ChEBI" id="CHEBI:17712"/>
    </ligand>
</feature>
<reference key="1">
    <citation type="journal article" date="2009" name="PLoS Genet.">
        <title>Organised genome dynamics in the Escherichia coli species results in highly diverse adaptive paths.</title>
        <authorList>
            <person name="Touchon M."/>
            <person name="Hoede C."/>
            <person name="Tenaillon O."/>
            <person name="Barbe V."/>
            <person name="Baeriswyl S."/>
            <person name="Bidet P."/>
            <person name="Bingen E."/>
            <person name="Bonacorsi S."/>
            <person name="Bouchier C."/>
            <person name="Bouvet O."/>
            <person name="Calteau A."/>
            <person name="Chiapello H."/>
            <person name="Clermont O."/>
            <person name="Cruveiller S."/>
            <person name="Danchin A."/>
            <person name="Diard M."/>
            <person name="Dossat C."/>
            <person name="Karoui M.E."/>
            <person name="Frapy E."/>
            <person name="Garry L."/>
            <person name="Ghigo J.M."/>
            <person name="Gilles A.M."/>
            <person name="Johnson J."/>
            <person name="Le Bouguenec C."/>
            <person name="Lescat M."/>
            <person name="Mangenot S."/>
            <person name="Martinez-Jehanne V."/>
            <person name="Matic I."/>
            <person name="Nassif X."/>
            <person name="Oztas S."/>
            <person name="Petit M.A."/>
            <person name="Pichon C."/>
            <person name="Rouy Z."/>
            <person name="Ruf C.S."/>
            <person name="Schneider D."/>
            <person name="Tourret J."/>
            <person name="Vacherie B."/>
            <person name="Vallenet D."/>
            <person name="Medigue C."/>
            <person name="Rocha E.P.C."/>
            <person name="Denamur E."/>
        </authorList>
    </citation>
    <scope>NUCLEOTIDE SEQUENCE [LARGE SCALE GENOMIC DNA]</scope>
    <source>
        <strain>ED1a</strain>
    </source>
</reference>
<gene>
    <name evidence="1" type="primary">gpt</name>
    <name type="ordered locus">ECED1_0272</name>
</gene>
<dbReference type="EC" id="2.4.2.-" evidence="1"/>
<dbReference type="EC" id="2.4.2.22" evidence="1"/>
<dbReference type="EMBL" id="CU928162">
    <property type="protein sequence ID" value="CAR06486.1"/>
    <property type="molecule type" value="Genomic_DNA"/>
</dbReference>
<dbReference type="RefSeq" id="WP_001291991.1">
    <property type="nucleotide sequence ID" value="NC_011745.1"/>
</dbReference>
<dbReference type="SMR" id="B7MQ74"/>
<dbReference type="GeneID" id="86945191"/>
<dbReference type="KEGG" id="ecq:ECED1_0272"/>
<dbReference type="HOGENOM" id="CLU_080904_3_0_6"/>
<dbReference type="UniPathway" id="UPA00602">
    <property type="reaction ID" value="UER00658"/>
</dbReference>
<dbReference type="UniPathway" id="UPA00909">
    <property type="reaction ID" value="UER00887"/>
</dbReference>
<dbReference type="Proteomes" id="UP000000748">
    <property type="component" value="Chromosome"/>
</dbReference>
<dbReference type="GO" id="GO:0005829">
    <property type="term" value="C:cytosol"/>
    <property type="evidence" value="ECO:0007669"/>
    <property type="project" value="TreeGrafter"/>
</dbReference>
<dbReference type="GO" id="GO:0005886">
    <property type="term" value="C:plasma membrane"/>
    <property type="evidence" value="ECO:0007669"/>
    <property type="project" value="UniProtKB-SubCell"/>
</dbReference>
<dbReference type="GO" id="GO:0052657">
    <property type="term" value="F:guanine phosphoribosyltransferase activity"/>
    <property type="evidence" value="ECO:0007669"/>
    <property type="project" value="RHEA"/>
</dbReference>
<dbReference type="GO" id="GO:0004422">
    <property type="term" value="F:hypoxanthine phosphoribosyltransferase activity"/>
    <property type="evidence" value="ECO:0007669"/>
    <property type="project" value="RHEA"/>
</dbReference>
<dbReference type="GO" id="GO:0000287">
    <property type="term" value="F:magnesium ion binding"/>
    <property type="evidence" value="ECO:0007669"/>
    <property type="project" value="UniProtKB-UniRule"/>
</dbReference>
<dbReference type="GO" id="GO:0000310">
    <property type="term" value="F:xanthine phosphoribosyltransferase activity"/>
    <property type="evidence" value="ECO:0007669"/>
    <property type="project" value="UniProtKB-UniRule"/>
</dbReference>
<dbReference type="GO" id="GO:0032263">
    <property type="term" value="P:GMP salvage"/>
    <property type="evidence" value="ECO:0007669"/>
    <property type="project" value="UniProtKB-UniRule"/>
</dbReference>
<dbReference type="GO" id="GO:0032264">
    <property type="term" value="P:IMP salvage"/>
    <property type="evidence" value="ECO:0007669"/>
    <property type="project" value="TreeGrafter"/>
</dbReference>
<dbReference type="GO" id="GO:0006166">
    <property type="term" value="P:purine ribonucleoside salvage"/>
    <property type="evidence" value="ECO:0007669"/>
    <property type="project" value="UniProtKB-KW"/>
</dbReference>
<dbReference type="GO" id="GO:0032265">
    <property type="term" value="P:XMP salvage"/>
    <property type="evidence" value="ECO:0007669"/>
    <property type="project" value="UniProtKB-UniRule"/>
</dbReference>
<dbReference type="CDD" id="cd06223">
    <property type="entry name" value="PRTases_typeI"/>
    <property type="match status" value="1"/>
</dbReference>
<dbReference type="FunFam" id="3.40.50.2020:FF:000009">
    <property type="entry name" value="Xanthine phosphoribosyltransferase"/>
    <property type="match status" value="1"/>
</dbReference>
<dbReference type="Gene3D" id="3.40.50.2020">
    <property type="match status" value="1"/>
</dbReference>
<dbReference type="HAMAP" id="MF_01903">
    <property type="entry name" value="XGPRT"/>
    <property type="match status" value="1"/>
</dbReference>
<dbReference type="InterPro" id="IPR000836">
    <property type="entry name" value="PRibTrfase_dom"/>
</dbReference>
<dbReference type="InterPro" id="IPR029057">
    <property type="entry name" value="PRTase-like"/>
</dbReference>
<dbReference type="InterPro" id="IPR023747">
    <property type="entry name" value="Xanthine_Guanine_PRibTrfase"/>
</dbReference>
<dbReference type="NCBIfam" id="NF006613">
    <property type="entry name" value="PRK09177.1"/>
    <property type="match status" value="1"/>
</dbReference>
<dbReference type="PANTHER" id="PTHR39563">
    <property type="entry name" value="XANTHINE PHOSPHORIBOSYLTRANSFERASE"/>
    <property type="match status" value="1"/>
</dbReference>
<dbReference type="PANTHER" id="PTHR39563:SF1">
    <property type="entry name" value="XANTHINE-GUANINE PHOSPHORIBOSYLTRANSFERASE"/>
    <property type="match status" value="1"/>
</dbReference>
<dbReference type="Pfam" id="PF00156">
    <property type="entry name" value="Pribosyltran"/>
    <property type="match status" value="1"/>
</dbReference>
<dbReference type="SUPFAM" id="SSF53271">
    <property type="entry name" value="PRTase-like"/>
    <property type="match status" value="1"/>
</dbReference>
<dbReference type="PROSITE" id="PS00103">
    <property type="entry name" value="PUR_PYR_PR_TRANSFER"/>
    <property type="match status" value="1"/>
</dbReference>
<comment type="function">
    <text evidence="1">Purine salvage pathway enzyme that catalyzes the transfer of the ribosyl-5-phosphate group from 5-phospho-alpha-D-ribose 1-diphosphate (PRPP) to the N9 position of the 6-oxopurines guanine and xanthine to form the corresponding ribonucleotides GMP (guanosine 5'-monophosphate) and XMP (xanthosine 5'-monophosphate), with the release of PPi. To a lesser extent, also acts on hypoxanthine.</text>
</comment>
<comment type="catalytic activity">
    <reaction evidence="1">
        <text>GMP + diphosphate = guanine + 5-phospho-alpha-D-ribose 1-diphosphate</text>
        <dbReference type="Rhea" id="RHEA:25424"/>
        <dbReference type="ChEBI" id="CHEBI:16235"/>
        <dbReference type="ChEBI" id="CHEBI:33019"/>
        <dbReference type="ChEBI" id="CHEBI:58017"/>
        <dbReference type="ChEBI" id="CHEBI:58115"/>
    </reaction>
    <physiologicalReaction direction="right-to-left" evidence="1">
        <dbReference type="Rhea" id="RHEA:25426"/>
    </physiologicalReaction>
</comment>
<comment type="catalytic activity">
    <reaction evidence="1">
        <text>XMP + diphosphate = xanthine + 5-phospho-alpha-D-ribose 1-diphosphate</text>
        <dbReference type="Rhea" id="RHEA:10800"/>
        <dbReference type="ChEBI" id="CHEBI:17712"/>
        <dbReference type="ChEBI" id="CHEBI:33019"/>
        <dbReference type="ChEBI" id="CHEBI:57464"/>
        <dbReference type="ChEBI" id="CHEBI:58017"/>
        <dbReference type="EC" id="2.4.2.22"/>
    </reaction>
    <physiologicalReaction direction="right-to-left" evidence="1">
        <dbReference type="Rhea" id="RHEA:10802"/>
    </physiologicalReaction>
</comment>
<comment type="catalytic activity">
    <reaction evidence="1">
        <text>IMP + diphosphate = hypoxanthine + 5-phospho-alpha-D-ribose 1-diphosphate</text>
        <dbReference type="Rhea" id="RHEA:17973"/>
        <dbReference type="ChEBI" id="CHEBI:17368"/>
        <dbReference type="ChEBI" id="CHEBI:33019"/>
        <dbReference type="ChEBI" id="CHEBI:58017"/>
        <dbReference type="ChEBI" id="CHEBI:58053"/>
    </reaction>
    <physiologicalReaction direction="right-to-left" evidence="1">
        <dbReference type="Rhea" id="RHEA:17975"/>
    </physiologicalReaction>
</comment>
<comment type="cofactor">
    <cofactor evidence="1">
        <name>Mg(2+)</name>
        <dbReference type="ChEBI" id="CHEBI:18420"/>
    </cofactor>
</comment>
<comment type="pathway">
    <text evidence="1">Purine metabolism; GMP biosynthesis via salvage pathway; GMP from guanine: step 1/1.</text>
</comment>
<comment type="pathway">
    <text evidence="1">Purine metabolism; XMP biosynthesis via salvage pathway; XMP from xanthine: step 1/1.</text>
</comment>
<comment type="subunit">
    <text evidence="1">Homotetramer.</text>
</comment>
<comment type="subcellular location">
    <subcellularLocation>
        <location evidence="1">Cell inner membrane</location>
        <topology evidence="1">Peripheral membrane protein</topology>
    </subcellularLocation>
</comment>
<comment type="similarity">
    <text evidence="1">Belongs to the purine/pyrimidine phosphoribosyltransferase family. XGPT subfamily.</text>
</comment>
<name>XGPT_ECO81</name>
<sequence length="152" mass="16970">MSEKYIVTWDMLQIHARKLASRLMPSEQWKGIIAVSRGGLVPGALLARELGIRHVDTVCISSYDHDNQRELKVLKRAEGDGEGFIVIDDLVDTGGTAVAIREMYPKAHFVTIFAKPAGRPLVDDYVVDIPQNTWIEQPWDMGVVFVPPISGR</sequence>
<evidence type="ECO:0000255" key="1">
    <source>
        <dbReference type="HAMAP-Rule" id="MF_01903"/>
    </source>
</evidence>
<proteinExistence type="inferred from homology"/>
<organism>
    <name type="scientific">Escherichia coli O81 (strain ED1a)</name>
    <dbReference type="NCBI Taxonomy" id="585397"/>
    <lineage>
        <taxon>Bacteria</taxon>
        <taxon>Pseudomonadati</taxon>
        <taxon>Pseudomonadota</taxon>
        <taxon>Gammaproteobacteria</taxon>
        <taxon>Enterobacterales</taxon>
        <taxon>Enterobacteriaceae</taxon>
        <taxon>Escherichia</taxon>
    </lineage>
</organism>